<keyword id="KW-0903">Direct protein sequencing</keyword>
<keyword id="KW-0349">Heme</keyword>
<keyword id="KW-0408">Iron</keyword>
<keyword id="KW-0479">Metal-binding</keyword>
<keyword id="KW-0561">Oxygen transport</keyword>
<keyword id="KW-0813">Transport</keyword>
<comment type="function">
    <text>Involved in oxygen transport from the lung to the various peripheral tissues.</text>
</comment>
<comment type="subunit">
    <text>Heterotetramer of two alpha chains and two beta chains.</text>
</comment>
<comment type="tissue specificity">
    <text>Red blood cells.</text>
</comment>
<comment type="similarity">
    <text evidence="1">Belongs to the globin family.</text>
</comment>
<protein>
    <recommendedName>
        <fullName>Hemoglobin subunit beta</fullName>
    </recommendedName>
    <alternativeName>
        <fullName>Beta-globin</fullName>
    </alternativeName>
    <alternativeName>
        <fullName>Hemoglobin beta chain</fullName>
    </alternativeName>
</protein>
<gene>
    <name type="primary">HBB</name>
</gene>
<reference key="1">
    <citation type="journal article" date="1977" name="Aust. J. Biol. Sci.">
        <title>Haemoglobins of the shark, Heterodontus portusjacksoni. III. Amino acid sequence of the beta-chain.</title>
        <authorList>
            <person name="Fisher W.K."/>
            <person name="Nash A.R."/>
            <person name="Thompson E.O.P."/>
        </authorList>
    </citation>
    <scope>PROTEIN SEQUENCE</scope>
</reference>
<sequence length="141" mass="16012">VHWSEVELHEITTTWKSIDKHSLGAKALARMFIVYPWTTRYFGNLKEFTACSYGVKEHAKKVTGALGVAVTHLGDVKSQFTDLSKKHAEELHVDVESFKLLAKCFVVELGILLKDKFAPQTQAIWEKYFGVVVDAISKEYH</sequence>
<dbReference type="PIR" id="A02463">
    <property type="entry name" value="HBRKJ"/>
</dbReference>
<dbReference type="SMR" id="P02143"/>
<dbReference type="GO" id="GO:0072562">
    <property type="term" value="C:blood microparticle"/>
    <property type="evidence" value="ECO:0007669"/>
    <property type="project" value="TreeGrafter"/>
</dbReference>
<dbReference type="GO" id="GO:0031838">
    <property type="term" value="C:haptoglobin-hemoglobin complex"/>
    <property type="evidence" value="ECO:0007669"/>
    <property type="project" value="TreeGrafter"/>
</dbReference>
<dbReference type="GO" id="GO:0005833">
    <property type="term" value="C:hemoglobin complex"/>
    <property type="evidence" value="ECO:0007669"/>
    <property type="project" value="InterPro"/>
</dbReference>
<dbReference type="GO" id="GO:0031720">
    <property type="term" value="F:haptoglobin binding"/>
    <property type="evidence" value="ECO:0007669"/>
    <property type="project" value="TreeGrafter"/>
</dbReference>
<dbReference type="GO" id="GO:0020037">
    <property type="term" value="F:heme binding"/>
    <property type="evidence" value="ECO:0007669"/>
    <property type="project" value="InterPro"/>
</dbReference>
<dbReference type="GO" id="GO:0046872">
    <property type="term" value="F:metal ion binding"/>
    <property type="evidence" value="ECO:0007669"/>
    <property type="project" value="UniProtKB-KW"/>
</dbReference>
<dbReference type="GO" id="GO:0043177">
    <property type="term" value="F:organic acid binding"/>
    <property type="evidence" value="ECO:0007669"/>
    <property type="project" value="TreeGrafter"/>
</dbReference>
<dbReference type="GO" id="GO:0019825">
    <property type="term" value="F:oxygen binding"/>
    <property type="evidence" value="ECO:0007669"/>
    <property type="project" value="InterPro"/>
</dbReference>
<dbReference type="GO" id="GO:0005344">
    <property type="term" value="F:oxygen carrier activity"/>
    <property type="evidence" value="ECO:0007669"/>
    <property type="project" value="UniProtKB-KW"/>
</dbReference>
<dbReference type="GO" id="GO:0004601">
    <property type="term" value="F:peroxidase activity"/>
    <property type="evidence" value="ECO:0007669"/>
    <property type="project" value="TreeGrafter"/>
</dbReference>
<dbReference type="GO" id="GO:0042744">
    <property type="term" value="P:hydrogen peroxide catabolic process"/>
    <property type="evidence" value="ECO:0007669"/>
    <property type="project" value="TreeGrafter"/>
</dbReference>
<dbReference type="CDD" id="cd08925">
    <property type="entry name" value="Hb-beta-like"/>
    <property type="match status" value="1"/>
</dbReference>
<dbReference type="Gene3D" id="1.10.490.10">
    <property type="entry name" value="Globins"/>
    <property type="match status" value="1"/>
</dbReference>
<dbReference type="InterPro" id="IPR000971">
    <property type="entry name" value="Globin"/>
</dbReference>
<dbReference type="InterPro" id="IPR009050">
    <property type="entry name" value="Globin-like_sf"/>
</dbReference>
<dbReference type="InterPro" id="IPR012292">
    <property type="entry name" value="Globin/Proto"/>
</dbReference>
<dbReference type="InterPro" id="IPR002337">
    <property type="entry name" value="Hemoglobin_b"/>
</dbReference>
<dbReference type="InterPro" id="IPR050056">
    <property type="entry name" value="Hemoglobin_oxygen_transport"/>
</dbReference>
<dbReference type="PANTHER" id="PTHR11442">
    <property type="entry name" value="HEMOGLOBIN FAMILY MEMBER"/>
    <property type="match status" value="1"/>
</dbReference>
<dbReference type="PANTHER" id="PTHR11442:SF7">
    <property type="entry name" value="HEMOGLOBIN SUBUNIT EPSILON"/>
    <property type="match status" value="1"/>
</dbReference>
<dbReference type="Pfam" id="PF00042">
    <property type="entry name" value="Globin"/>
    <property type="match status" value="1"/>
</dbReference>
<dbReference type="PRINTS" id="PR00814">
    <property type="entry name" value="BETAHAEM"/>
</dbReference>
<dbReference type="SUPFAM" id="SSF46458">
    <property type="entry name" value="Globin-like"/>
    <property type="match status" value="1"/>
</dbReference>
<dbReference type="PROSITE" id="PS01033">
    <property type="entry name" value="GLOBIN"/>
    <property type="match status" value="1"/>
</dbReference>
<accession>P02143</accession>
<evidence type="ECO:0000255" key="1">
    <source>
        <dbReference type="PROSITE-ProRule" id="PRU00238"/>
    </source>
</evidence>
<name>HBB_HETPO</name>
<organism>
    <name type="scientific">Heterodontus portusjacksoni</name>
    <name type="common">Port Jackson shark</name>
    <dbReference type="NCBI Taxonomy" id="7793"/>
    <lineage>
        <taxon>Eukaryota</taxon>
        <taxon>Metazoa</taxon>
        <taxon>Chordata</taxon>
        <taxon>Craniata</taxon>
        <taxon>Vertebrata</taxon>
        <taxon>Chondrichthyes</taxon>
        <taxon>Elasmobranchii</taxon>
        <taxon>Galeomorphii</taxon>
        <taxon>Heterodontoidea</taxon>
        <taxon>Heterodontiformes</taxon>
        <taxon>Heterodontidae</taxon>
        <taxon>Heterodontus</taxon>
    </lineage>
</organism>
<feature type="chain" id="PRO_0000052972" description="Hemoglobin subunit beta">
    <location>
        <begin position="1"/>
        <end position="141"/>
    </location>
</feature>
<feature type="domain" description="Globin" evidence="1">
    <location>
        <begin position="2"/>
        <end position="141"/>
    </location>
</feature>
<feature type="binding site" description="distal binding residue">
    <location>
        <position position="58"/>
    </location>
    <ligand>
        <name>heme b</name>
        <dbReference type="ChEBI" id="CHEBI:60344"/>
    </ligand>
    <ligandPart>
        <name>Fe</name>
        <dbReference type="ChEBI" id="CHEBI:18248"/>
    </ligandPart>
</feature>
<feature type="binding site" description="proximal binding residue">
    <location>
        <position position="87"/>
    </location>
    <ligand>
        <name>heme b</name>
        <dbReference type="ChEBI" id="CHEBI:60344"/>
    </ligand>
    <ligandPart>
        <name>Fe</name>
        <dbReference type="ChEBI" id="CHEBI:18248"/>
    </ligandPart>
</feature>
<proteinExistence type="evidence at protein level"/>